<sequence length="102" mass="11231">MVYAVVRAGGRQEKVEVGTIVTMDRVKNQQSGKVVLPAVLLVDGDTITTDAAKLADVTVSAEILNDLRGPKIVIQKFKNKTGYKKRQGHRQDLTRVQVTEIN</sequence>
<organism>
    <name type="scientific">Clavibacter sepedonicus</name>
    <name type="common">Clavibacter michiganensis subsp. sepedonicus</name>
    <dbReference type="NCBI Taxonomy" id="31964"/>
    <lineage>
        <taxon>Bacteria</taxon>
        <taxon>Bacillati</taxon>
        <taxon>Actinomycetota</taxon>
        <taxon>Actinomycetes</taxon>
        <taxon>Micrococcales</taxon>
        <taxon>Microbacteriaceae</taxon>
        <taxon>Clavibacter</taxon>
    </lineage>
</organism>
<gene>
    <name evidence="1" type="primary">rplU</name>
    <name type="ordered locus">CMS1816</name>
</gene>
<proteinExistence type="inferred from homology"/>
<accession>B0RDG5</accession>
<reference key="1">
    <citation type="journal article" date="2008" name="J. Bacteriol.">
        <title>Genome of the actinomycete plant pathogen Clavibacter michiganensis subsp. sepedonicus suggests recent niche adaptation.</title>
        <authorList>
            <person name="Bentley S.D."/>
            <person name="Corton C."/>
            <person name="Brown S.E."/>
            <person name="Barron A."/>
            <person name="Clark L."/>
            <person name="Doggett J."/>
            <person name="Harris B."/>
            <person name="Ormond D."/>
            <person name="Quail M.A."/>
            <person name="May G."/>
            <person name="Francis D."/>
            <person name="Knudson D."/>
            <person name="Parkhill J."/>
            <person name="Ishimaru C.A."/>
        </authorList>
    </citation>
    <scope>NUCLEOTIDE SEQUENCE [LARGE SCALE GENOMIC DNA]</scope>
    <source>
        <strain>ATCC 33113 / DSM 20744 / JCM 9667 / LMG 2889 / ICMP 2535 / C-1</strain>
    </source>
</reference>
<feature type="chain" id="PRO_1000086973" description="Large ribosomal subunit protein bL21">
    <location>
        <begin position="1"/>
        <end position="102"/>
    </location>
</feature>
<dbReference type="EMBL" id="AM849034">
    <property type="protein sequence ID" value="CAQ01921.1"/>
    <property type="molecule type" value="Genomic_DNA"/>
</dbReference>
<dbReference type="RefSeq" id="WP_012038175.1">
    <property type="nucleotide sequence ID" value="NZ_MZMN01000003.1"/>
</dbReference>
<dbReference type="SMR" id="B0RDG5"/>
<dbReference type="STRING" id="31964.CMS1816"/>
<dbReference type="GeneID" id="92983253"/>
<dbReference type="KEGG" id="cms:CMS1816"/>
<dbReference type="eggNOG" id="COG0261">
    <property type="taxonomic scope" value="Bacteria"/>
</dbReference>
<dbReference type="HOGENOM" id="CLU_061463_3_0_11"/>
<dbReference type="OrthoDB" id="9813334at2"/>
<dbReference type="Proteomes" id="UP000001318">
    <property type="component" value="Chromosome"/>
</dbReference>
<dbReference type="GO" id="GO:0005737">
    <property type="term" value="C:cytoplasm"/>
    <property type="evidence" value="ECO:0007669"/>
    <property type="project" value="UniProtKB-ARBA"/>
</dbReference>
<dbReference type="GO" id="GO:1990904">
    <property type="term" value="C:ribonucleoprotein complex"/>
    <property type="evidence" value="ECO:0007669"/>
    <property type="project" value="UniProtKB-KW"/>
</dbReference>
<dbReference type="GO" id="GO:0005840">
    <property type="term" value="C:ribosome"/>
    <property type="evidence" value="ECO:0007669"/>
    <property type="project" value="UniProtKB-KW"/>
</dbReference>
<dbReference type="GO" id="GO:0019843">
    <property type="term" value="F:rRNA binding"/>
    <property type="evidence" value="ECO:0007669"/>
    <property type="project" value="UniProtKB-UniRule"/>
</dbReference>
<dbReference type="GO" id="GO:0003735">
    <property type="term" value="F:structural constituent of ribosome"/>
    <property type="evidence" value="ECO:0007669"/>
    <property type="project" value="InterPro"/>
</dbReference>
<dbReference type="GO" id="GO:0006412">
    <property type="term" value="P:translation"/>
    <property type="evidence" value="ECO:0007669"/>
    <property type="project" value="UniProtKB-UniRule"/>
</dbReference>
<dbReference type="HAMAP" id="MF_01363">
    <property type="entry name" value="Ribosomal_bL21"/>
    <property type="match status" value="1"/>
</dbReference>
<dbReference type="InterPro" id="IPR028909">
    <property type="entry name" value="bL21-like"/>
</dbReference>
<dbReference type="InterPro" id="IPR036164">
    <property type="entry name" value="bL21-like_sf"/>
</dbReference>
<dbReference type="InterPro" id="IPR001787">
    <property type="entry name" value="Ribosomal_bL21"/>
</dbReference>
<dbReference type="InterPro" id="IPR018258">
    <property type="entry name" value="Ribosomal_bL21_CS"/>
</dbReference>
<dbReference type="NCBIfam" id="TIGR00061">
    <property type="entry name" value="L21"/>
    <property type="match status" value="1"/>
</dbReference>
<dbReference type="PANTHER" id="PTHR21349">
    <property type="entry name" value="50S RIBOSOMAL PROTEIN L21"/>
    <property type="match status" value="1"/>
</dbReference>
<dbReference type="PANTHER" id="PTHR21349:SF0">
    <property type="entry name" value="LARGE RIBOSOMAL SUBUNIT PROTEIN BL21M"/>
    <property type="match status" value="1"/>
</dbReference>
<dbReference type="Pfam" id="PF00829">
    <property type="entry name" value="Ribosomal_L21p"/>
    <property type="match status" value="1"/>
</dbReference>
<dbReference type="SUPFAM" id="SSF141091">
    <property type="entry name" value="L21p-like"/>
    <property type="match status" value="1"/>
</dbReference>
<dbReference type="PROSITE" id="PS01169">
    <property type="entry name" value="RIBOSOMAL_L21"/>
    <property type="match status" value="1"/>
</dbReference>
<comment type="function">
    <text evidence="1">This protein binds to 23S rRNA in the presence of protein L20.</text>
</comment>
<comment type="subunit">
    <text evidence="1">Part of the 50S ribosomal subunit. Contacts protein L20.</text>
</comment>
<comment type="similarity">
    <text evidence="1">Belongs to the bacterial ribosomal protein bL21 family.</text>
</comment>
<keyword id="KW-0687">Ribonucleoprotein</keyword>
<keyword id="KW-0689">Ribosomal protein</keyword>
<keyword id="KW-0694">RNA-binding</keyword>
<keyword id="KW-0699">rRNA-binding</keyword>
<evidence type="ECO:0000255" key="1">
    <source>
        <dbReference type="HAMAP-Rule" id="MF_01363"/>
    </source>
</evidence>
<evidence type="ECO:0000305" key="2"/>
<protein>
    <recommendedName>
        <fullName evidence="1">Large ribosomal subunit protein bL21</fullName>
    </recommendedName>
    <alternativeName>
        <fullName evidence="2">50S ribosomal protein L21</fullName>
    </alternativeName>
</protein>
<name>RL21_CLASE</name>